<keyword id="KW-0240">DNA-directed RNA polymerase</keyword>
<keyword id="KW-0460">Magnesium</keyword>
<keyword id="KW-0479">Metal-binding</keyword>
<keyword id="KW-0548">Nucleotidyltransferase</keyword>
<keyword id="KW-1185">Reference proteome</keyword>
<keyword id="KW-0804">Transcription</keyword>
<keyword id="KW-0808">Transferase</keyword>
<keyword id="KW-0862">Zinc</keyword>
<feature type="chain" id="PRO_0000067783" description="DNA-directed RNA polymerase subunit beta'">
    <location>
        <begin position="1"/>
        <end position="1401"/>
    </location>
</feature>
<feature type="region of interest" description="Disordered" evidence="2">
    <location>
        <begin position="1377"/>
        <end position="1401"/>
    </location>
</feature>
<feature type="binding site" evidence="1">
    <location>
        <position position="71"/>
    </location>
    <ligand>
        <name>Zn(2+)</name>
        <dbReference type="ChEBI" id="CHEBI:29105"/>
        <label>1</label>
    </ligand>
</feature>
<feature type="binding site" evidence="1">
    <location>
        <position position="73"/>
    </location>
    <ligand>
        <name>Zn(2+)</name>
        <dbReference type="ChEBI" id="CHEBI:29105"/>
        <label>1</label>
    </ligand>
</feature>
<feature type="binding site" evidence="1">
    <location>
        <position position="86"/>
    </location>
    <ligand>
        <name>Zn(2+)</name>
        <dbReference type="ChEBI" id="CHEBI:29105"/>
        <label>1</label>
    </ligand>
</feature>
<feature type="binding site" evidence="1">
    <location>
        <position position="89"/>
    </location>
    <ligand>
        <name>Zn(2+)</name>
        <dbReference type="ChEBI" id="CHEBI:29105"/>
        <label>1</label>
    </ligand>
</feature>
<feature type="binding site" evidence="1">
    <location>
        <position position="462"/>
    </location>
    <ligand>
        <name>Mg(2+)</name>
        <dbReference type="ChEBI" id="CHEBI:18420"/>
    </ligand>
</feature>
<feature type="binding site" evidence="1">
    <location>
        <position position="464"/>
    </location>
    <ligand>
        <name>Mg(2+)</name>
        <dbReference type="ChEBI" id="CHEBI:18420"/>
    </ligand>
</feature>
<feature type="binding site" evidence="1">
    <location>
        <position position="466"/>
    </location>
    <ligand>
        <name>Mg(2+)</name>
        <dbReference type="ChEBI" id="CHEBI:18420"/>
    </ligand>
</feature>
<feature type="binding site" evidence="1">
    <location>
        <position position="810"/>
    </location>
    <ligand>
        <name>Zn(2+)</name>
        <dbReference type="ChEBI" id="CHEBI:29105"/>
        <label>2</label>
    </ligand>
</feature>
<feature type="binding site" evidence="1">
    <location>
        <position position="884"/>
    </location>
    <ligand>
        <name>Zn(2+)</name>
        <dbReference type="ChEBI" id="CHEBI:29105"/>
        <label>2</label>
    </ligand>
</feature>
<feature type="binding site" evidence="1">
    <location>
        <position position="891"/>
    </location>
    <ligand>
        <name>Zn(2+)</name>
        <dbReference type="ChEBI" id="CHEBI:29105"/>
        <label>2</label>
    </ligand>
</feature>
<feature type="binding site" evidence="1">
    <location>
        <position position="894"/>
    </location>
    <ligand>
        <name>Zn(2+)</name>
        <dbReference type="ChEBI" id="CHEBI:29105"/>
        <label>2</label>
    </ligand>
</feature>
<gene>
    <name evidence="1" type="primary">rpoC</name>
    <name type="ordered locus">R01349</name>
    <name type="ORF">SMc01316</name>
</gene>
<name>RPOC_RHIME</name>
<accession>Q92QH6</accession>
<comment type="function">
    <text evidence="1">DNA-dependent RNA polymerase catalyzes the transcription of DNA into RNA using the four ribonucleoside triphosphates as substrates.</text>
</comment>
<comment type="catalytic activity">
    <reaction evidence="1">
        <text>RNA(n) + a ribonucleoside 5'-triphosphate = RNA(n+1) + diphosphate</text>
        <dbReference type="Rhea" id="RHEA:21248"/>
        <dbReference type="Rhea" id="RHEA-COMP:14527"/>
        <dbReference type="Rhea" id="RHEA-COMP:17342"/>
        <dbReference type="ChEBI" id="CHEBI:33019"/>
        <dbReference type="ChEBI" id="CHEBI:61557"/>
        <dbReference type="ChEBI" id="CHEBI:140395"/>
        <dbReference type="EC" id="2.7.7.6"/>
    </reaction>
</comment>
<comment type="cofactor">
    <cofactor evidence="1">
        <name>Mg(2+)</name>
        <dbReference type="ChEBI" id="CHEBI:18420"/>
    </cofactor>
    <text evidence="1">Binds 1 Mg(2+) ion per subunit.</text>
</comment>
<comment type="cofactor">
    <cofactor evidence="1">
        <name>Zn(2+)</name>
        <dbReference type="ChEBI" id="CHEBI:29105"/>
    </cofactor>
    <text evidence="1">Binds 2 Zn(2+) ions per subunit.</text>
</comment>
<comment type="subunit">
    <text evidence="1">The RNAP catalytic core consists of 2 alpha, 1 beta, 1 beta' and 1 omega subunit. When a sigma factor is associated with the core the holoenzyme is formed, which can initiate transcription.</text>
</comment>
<comment type="similarity">
    <text evidence="1">Belongs to the RNA polymerase beta' chain family.</text>
</comment>
<evidence type="ECO:0000255" key="1">
    <source>
        <dbReference type="HAMAP-Rule" id="MF_01322"/>
    </source>
</evidence>
<evidence type="ECO:0000256" key="2">
    <source>
        <dbReference type="SAM" id="MobiDB-lite"/>
    </source>
</evidence>
<proteinExistence type="inferred from homology"/>
<organism>
    <name type="scientific">Rhizobium meliloti (strain 1021)</name>
    <name type="common">Ensifer meliloti</name>
    <name type="synonym">Sinorhizobium meliloti</name>
    <dbReference type="NCBI Taxonomy" id="266834"/>
    <lineage>
        <taxon>Bacteria</taxon>
        <taxon>Pseudomonadati</taxon>
        <taxon>Pseudomonadota</taxon>
        <taxon>Alphaproteobacteria</taxon>
        <taxon>Hyphomicrobiales</taxon>
        <taxon>Rhizobiaceae</taxon>
        <taxon>Sinorhizobium/Ensifer group</taxon>
        <taxon>Sinorhizobium</taxon>
    </lineage>
</organism>
<dbReference type="EC" id="2.7.7.6" evidence="1"/>
<dbReference type="EMBL" id="AL591688">
    <property type="protein sequence ID" value="CAC45928.1"/>
    <property type="molecule type" value="Genomic_DNA"/>
</dbReference>
<dbReference type="RefSeq" id="NP_385455.1">
    <property type="nucleotide sequence ID" value="NC_003047.1"/>
</dbReference>
<dbReference type="RefSeq" id="WP_003536196.1">
    <property type="nucleotide sequence ID" value="NC_003047.1"/>
</dbReference>
<dbReference type="SMR" id="Q92QH6"/>
<dbReference type="EnsemblBacteria" id="CAC45928">
    <property type="protein sequence ID" value="CAC45928"/>
    <property type="gene ID" value="SMc01316"/>
</dbReference>
<dbReference type="GeneID" id="89575673"/>
<dbReference type="KEGG" id="sme:SMc01316"/>
<dbReference type="PATRIC" id="fig|266834.11.peg.2764"/>
<dbReference type="eggNOG" id="COG0086">
    <property type="taxonomic scope" value="Bacteria"/>
</dbReference>
<dbReference type="HOGENOM" id="CLU_000524_3_1_5"/>
<dbReference type="OrthoDB" id="9815296at2"/>
<dbReference type="Proteomes" id="UP000001976">
    <property type="component" value="Chromosome"/>
</dbReference>
<dbReference type="GO" id="GO:0000428">
    <property type="term" value="C:DNA-directed RNA polymerase complex"/>
    <property type="evidence" value="ECO:0007669"/>
    <property type="project" value="UniProtKB-KW"/>
</dbReference>
<dbReference type="GO" id="GO:0003677">
    <property type="term" value="F:DNA binding"/>
    <property type="evidence" value="ECO:0007669"/>
    <property type="project" value="UniProtKB-UniRule"/>
</dbReference>
<dbReference type="GO" id="GO:0003899">
    <property type="term" value="F:DNA-directed RNA polymerase activity"/>
    <property type="evidence" value="ECO:0007669"/>
    <property type="project" value="UniProtKB-UniRule"/>
</dbReference>
<dbReference type="GO" id="GO:0000287">
    <property type="term" value="F:magnesium ion binding"/>
    <property type="evidence" value="ECO:0007669"/>
    <property type="project" value="UniProtKB-UniRule"/>
</dbReference>
<dbReference type="GO" id="GO:0008270">
    <property type="term" value="F:zinc ion binding"/>
    <property type="evidence" value="ECO:0007669"/>
    <property type="project" value="UniProtKB-UniRule"/>
</dbReference>
<dbReference type="GO" id="GO:0006351">
    <property type="term" value="P:DNA-templated transcription"/>
    <property type="evidence" value="ECO:0007669"/>
    <property type="project" value="UniProtKB-UniRule"/>
</dbReference>
<dbReference type="CDD" id="cd02655">
    <property type="entry name" value="RNAP_beta'_C"/>
    <property type="match status" value="1"/>
</dbReference>
<dbReference type="CDD" id="cd01609">
    <property type="entry name" value="RNAP_beta'_N"/>
    <property type="match status" value="1"/>
</dbReference>
<dbReference type="Gene3D" id="1.10.132.30">
    <property type="match status" value="1"/>
</dbReference>
<dbReference type="Gene3D" id="1.10.150.390">
    <property type="match status" value="1"/>
</dbReference>
<dbReference type="Gene3D" id="1.10.1790.20">
    <property type="match status" value="1"/>
</dbReference>
<dbReference type="Gene3D" id="1.10.40.90">
    <property type="match status" value="1"/>
</dbReference>
<dbReference type="Gene3D" id="2.40.40.20">
    <property type="match status" value="1"/>
</dbReference>
<dbReference type="Gene3D" id="2.40.50.100">
    <property type="match status" value="3"/>
</dbReference>
<dbReference type="Gene3D" id="4.10.860.120">
    <property type="entry name" value="RNA polymerase II, clamp domain"/>
    <property type="match status" value="1"/>
</dbReference>
<dbReference type="Gene3D" id="1.10.274.100">
    <property type="entry name" value="RNA polymerase Rpb1, domain 3"/>
    <property type="match status" value="2"/>
</dbReference>
<dbReference type="HAMAP" id="MF_01322">
    <property type="entry name" value="RNApol_bact_RpoC"/>
    <property type="match status" value="1"/>
</dbReference>
<dbReference type="InterPro" id="IPR045867">
    <property type="entry name" value="DNA-dir_RpoC_beta_prime"/>
</dbReference>
<dbReference type="InterPro" id="IPR012754">
    <property type="entry name" value="DNA-dir_RpoC_beta_prime_bact"/>
</dbReference>
<dbReference type="InterPro" id="IPR000722">
    <property type="entry name" value="RNA_pol_asu"/>
</dbReference>
<dbReference type="InterPro" id="IPR006592">
    <property type="entry name" value="RNA_pol_N"/>
</dbReference>
<dbReference type="InterPro" id="IPR007080">
    <property type="entry name" value="RNA_pol_Rpb1_1"/>
</dbReference>
<dbReference type="InterPro" id="IPR007066">
    <property type="entry name" value="RNA_pol_Rpb1_3"/>
</dbReference>
<dbReference type="InterPro" id="IPR042102">
    <property type="entry name" value="RNA_pol_Rpb1_3_sf"/>
</dbReference>
<dbReference type="InterPro" id="IPR007083">
    <property type="entry name" value="RNA_pol_Rpb1_4"/>
</dbReference>
<dbReference type="InterPro" id="IPR007081">
    <property type="entry name" value="RNA_pol_Rpb1_5"/>
</dbReference>
<dbReference type="InterPro" id="IPR044893">
    <property type="entry name" value="RNA_pol_Rpb1_clamp_domain"/>
</dbReference>
<dbReference type="InterPro" id="IPR038120">
    <property type="entry name" value="Rpb1_funnel_sf"/>
</dbReference>
<dbReference type="NCBIfam" id="TIGR02386">
    <property type="entry name" value="rpoC_TIGR"/>
    <property type="match status" value="1"/>
</dbReference>
<dbReference type="PANTHER" id="PTHR19376">
    <property type="entry name" value="DNA-DIRECTED RNA POLYMERASE"/>
    <property type="match status" value="1"/>
</dbReference>
<dbReference type="PANTHER" id="PTHR19376:SF54">
    <property type="entry name" value="DNA-DIRECTED RNA POLYMERASE SUBUNIT BETA"/>
    <property type="match status" value="1"/>
</dbReference>
<dbReference type="Pfam" id="PF04997">
    <property type="entry name" value="RNA_pol_Rpb1_1"/>
    <property type="match status" value="1"/>
</dbReference>
<dbReference type="Pfam" id="PF00623">
    <property type="entry name" value="RNA_pol_Rpb1_2"/>
    <property type="match status" value="1"/>
</dbReference>
<dbReference type="Pfam" id="PF04983">
    <property type="entry name" value="RNA_pol_Rpb1_3"/>
    <property type="match status" value="1"/>
</dbReference>
<dbReference type="Pfam" id="PF05000">
    <property type="entry name" value="RNA_pol_Rpb1_4"/>
    <property type="match status" value="1"/>
</dbReference>
<dbReference type="Pfam" id="PF04998">
    <property type="entry name" value="RNA_pol_Rpb1_5"/>
    <property type="match status" value="1"/>
</dbReference>
<dbReference type="SMART" id="SM00663">
    <property type="entry name" value="RPOLA_N"/>
    <property type="match status" value="1"/>
</dbReference>
<dbReference type="SUPFAM" id="SSF64484">
    <property type="entry name" value="beta and beta-prime subunits of DNA dependent RNA-polymerase"/>
    <property type="match status" value="1"/>
</dbReference>
<sequence>MNQEVMNLFNPQVPAQTFDSIRISIASPEKILSWSYGEIKKPETINYRTFKPERDGLFCARIFGPIKDYECLCGKYKRMKYKGIICEKCGVEVTLSRVRRERMGHIELAAPVAHIWFLKSLPSRIATLLDMTLKDIERVLYFENYIVTEPGLTSLKENQLLSEEEYMIAVDEFGEDQFTAMIGAEAIYEMLASMNLEKIAGDLRSEMAETTSDLKQKKLMKRLKIVENFMESGNRPEWMIMKVVPVIPPDLRPLVPLDGGRFATSDLNDLYRRVINRNNRLKRLIELRAPGIIIRNEKRMLQESVDALFDNGRRGRVITGANKRPLKSLSDMLKGKQGRFRQNLLGKRVDYSGRSVIVTGPELKLHQCGLPKKMALELFKPFIYARLDAKGYSSTVKQAKKLVEKEKPEVWDILDEVIREHPVLLNRAPTLHRLGIQAFEPILVEGKAIQLHPLVCTAFNADFDGDQMAVHVPLSLEAQLEARVLMMSTNNILHPANGAPIIVPSQDMVLGLYYLSIMNQNEPGEGMAFSDMGELHHALETKAVTLHAKIRGRYKTVDAEGNPVSKIYETTPGRMIIGELLPKNPNVPFETCNQEMTKKNISKMIDTVYRHCGQKDTVIFCDRIMQLGFSHACRAGISFGKDDMVIPDTKVKIVGDTEALVKEYEQQYNDGLITQGEKYNKVVDAWGKATEKVAEEMMARIKAVEFDDSGRQKPMNSIYMMSHSGARGSPNQMRQLGGMRGLMAKPSGEIIETPIISNFKEGLTVNEYFNSTHGARKGLADTALKTANSGYLTRRLVDVAQDCIVTHTDCGTDKGLTMTAIVDAGQVVASIGQRILGRTALDNIDNPVTGERIVDAGKMILEPDVVAIEKAGIQSVRIRSALTCEIQTGVCGVCYGRDLARGTPVNMGEAVGVIAAQSIGEPGTQLTMRTFHLGGTATVVDQSFLEASYEGTVQIKNRNMLRNSDGVLVAMGRNMAIQILDERGVERSSQRVAYGSKIFVDDGDKVKRGQRFAEWDPYTRPMMTEVEGTVHFEDVVDGISVLESTDESTGITKRQVIDWRSTPRGTDLKPAIVIKDKNGNIAKLARGGEARFMLSVDAILSVEPGQKVSQGDVLARSPLESAKTKDITGGLPRVAELFEARRPKDHAIIAEIDGTIRFGRDYKNKRRVMIEPAEDGVEPVEYLIPKGKPFHLQDGDYIEKGDYILDGNPAPHDILAIKGVEALASYLVNEIQEVYRLQGVVINDKHIEVIVRQMLQKVEITDAGDSTYIVGDNVDRIELEDVNDSLLAEGKKPAFGEPVLLGITKASLQTPSFISAASFQETTKVLTEAAVAGKTDNLQGLKENVIVGRLIPAGTGGTMTQIRRIATARDELILEERRKGTGAESATPMLADMANDPAAAE</sequence>
<protein>
    <recommendedName>
        <fullName evidence="1">DNA-directed RNA polymerase subunit beta'</fullName>
        <shortName evidence="1">RNAP subunit beta'</shortName>
        <ecNumber evidence="1">2.7.7.6</ecNumber>
    </recommendedName>
    <alternativeName>
        <fullName evidence="1">RNA polymerase subunit beta'</fullName>
    </alternativeName>
    <alternativeName>
        <fullName evidence="1">Transcriptase subunit beta'</fullName>
    </alternativeName>
</protein>
<reference key="1">
    <citation type="journal article" date="2001" name="Proc. Natl. Acad. Sci. U.S.A.">
        <title>Analysis of the chromosome sequence of the legume symbiont Sinorhizobium meliloti strain 1021.</title>
        <authorList>
            <person name="Capela D."/>
            <person name="Barloy-Hubler F."/>
            <person name="Gouzy J."/>
            <person name="Bothe G."/>
            <person name="Ampe F."/>
            <person name="Batut J."/>
            <person name="Boistard P."/>
            <person name="Becker A."/>
            <person name="Boutry M."/>
            <person name="Cadieu E."/>
            <person name="Dreano S."/>
            <person name="Gloux S."/>
            <person name="Godrie T."/>
            <person name="Goffeau A."/>
            <person name="Kahn D."/>
            <person name="Kiss E."/>
            <person name="Lelaure V."/>
            <person name="Masuy D."/>
            <person name="Pohl T."/>
            <person name="Portetelle D."/>
            <person name="Puehler A."/>
            <person name="Purnelle B."/>
            <person name="Ramsperger U."/>
            <person name="Renard C."/>
            <person name="Thebault P."/>
            <person name="Vandenbol M."/>
            <person name="Weidner S."/>
            <person name="Galibert F."/>
        </authorList>
    </citation>
    <scope>NUCLEOTIDE SEQUENCE [LARGE SCALE GENOMIC DNA]</scope>
    <source>
        <strain>1021</strain>
    </source>
</reference>
<reference key="2">
    <citation type="journal article" date="2001" name="Science">
        <title>The composite genome of the legume symbiont Sinorhizobium meliloti.</title>
        <authorList>
            <person name="Galibert F."/>
            <person name="Finan T.M."/>
            <person name="Long S.R."/>
            <person name="Puehler A."/>
            <person name="Abola P."/>
            <person name="Ampe F."/>
            <person name="Barloy-Hubler F."/>
            <person name="Barnett M.J."/>
            <person name="Becker A."/>
            <person name="Boistard P."/>
            <person name="Bothe G."/>
            <person name="Boutry M."/>
            <person name="Bowser L."/>
            <person name="Buhrmester J."/>
            <person name="Cadieu E."/>
            <person name="Capela D."/>
            <person name="Chain P."/>
            <person name="Cowie A."/>
            <person name="Davis R.W."/>
            <person name="Dreano S."/>
            <person name="Federspiel N.A."/>
            <person name="Fisher R.F."/>
            <person name="Gloux S."/>
            <person name="Godrie T."/>
            <person name="Goffeau A."/>
            <person name="Golding B."/>
            <person name="Gouzy J."/>
            <person name="Gurjal M."/>
            <person name="Hernandez-Lucas I."/>
            <person name="Hong A."/>
            <person name="Huizar L."/>
            <person name="Hyman R.W."/>
            <person name="Jones T."/>
            <person name="Kahn D."/>
            <person name="Kahn M.L."/>
            <person name="Kalman S."/>
            <person name="Keating D.H."/>
            <person name="Kiss E."/>
            <person name="Komp C."/>
            <person name="Lelaure V."/>
            <person name="Masuy D."/>
            <person name="Palm C."/>
            <person name="Peck M.C."/>
            <person name="Pohl T.M."/>
            <person name="Portetelle D."/>
            <person name="Purnelle B."/>
            <person name="Ramsperger U."/>
            <person name="Surzycki R."/>
            <person name="Thebault P."/>
            <person name="Vandenbol M."/>
            <person name="Vorhoelter F.J."/>
            <person name="Weidner S."/>
            <person name="Wells D.H."/>
            <person name="Wong K."/>
            <person name="Yeh K.-C."/>
            <person name="Batut J."/>
        </authorList>
    </citation>
    <scope>NUCLEOTIDE SEQUENCE [LARGE SCALE GENOMIC DNA]</scope>
    <source>
        <strain>1021</strain>
    </source>
</reference>